<keyword id="KW-0030">Aminoacyl-tRNA synthetase</keyword>
<keyword id="KW-0067">ATP-binding</keyword>
<keyword id="KW-0963">Cytoplasm</keyword>
<keyword id="KW-0436">Ligase</keyword>
<keyword id="KW-0479">Metal-binding</keyword>
<keyword id="KW-0547">Nucleotide-binding</keyword>
<keyword id="KW-0648">Protein biosynthesis</keyword>
<keyword id="KW-0694">RNA-binding</keyword>
<keyword id="KW-0820">tRNA-binding</keyword>
<keyword id="KW-0862">Zinc</keyword>
<gene>
    <name evidence="1" type="primary">metG</name>
    <name type="ordered locus">SPA0697</name>
</gene>
<organism>
    <name type="scientific">Salmonella paratyphi A (strain ATCC 9150 / SARB42)</name>
    <dbReference type="NCBI Taxonomy" id="295319"/>
    <lineage>
        <taxon>Bacteria</taxon>
        <taxon>Pseudomonadati</taxon>
        <taxon>Pseudomonadota</taxon>
        <taxon>Gammaproteobacteria</taxon>
        <taxon>Enterobacterales</taxon>
        <taxon>Enterobacteriaceae</taxon>
        <taxon>Salmonella</taxon>
    </lineage>
</organism>
<feature type="chain" id="PRO_0000139160" description="Methionine--tRNA ligase">
    <location>
        <begin position="1"/>
        <end position="677"/>
    </location>
</feature>
<feature type="domain" description="tRNA-binding" evidence="1">
    <location>
        <begin position="575"/>
        <end position="677"/>
    </location>
</feature>
<feature type="short sequence motif" description="'HIGH' region">
    <location>
        <begin position="15"/>
        <end position="25"/>
    </location>
</feature>
<feature type="short sequence motif" description="'KMSKS' region">
    <location>
        <begin position="333"/>
        <end position="337"/>
    </location>
</feature>
<feature type="binding site" evidence="1">
    <location>
        <position position="146"/>
    </location>
    <ligand>
        <name>Zn(2+)</name>
        <dbReference type="ChEBI" id="CHEBI:29105"/>
    </ligand>
</feature>
<feature type="binding site" evidence="1">
    <location>
        <position position="149"/>
    </location>
    <ligand>
        <name>Zn(2+)</name>
        <dbReference type="ChEBI" id="CHEBI:29105"/>
    </ligand>
</feature>
<feature type="binding site" evidence="1">
    <location>
        <position position="159"/>
    </location>
    <ligand>
        <name>Zn(2+)</name>
        <dbReference type="ChEBI" id="CHEBI:29105"/>
    </ligand>
</feature>
<feature type="binding site" evidence="1">
    <location>
        <position position="162"/>
    </location>
    <ligand>
        <name>Zn(2+)</name>
        <dbReference type="ChEBI" id="CHEBI:29105"/>
    </ligand>
</feature>
<feature type="binding site" evidence="1">
    <location>
        <position position="336"/>
    </location>
    <ligand>
        <name>ATP</name>
        <dbReference type="ChEBI" id="CHEBI:30616"/>
    </ligand>
</feature>
<accession>Q5PJ43</accession>
<evidence type="ECO:0000255" key="1">
    <source>
        <dbReference type="HAMAP-Rule" id="MF_00098"/>
    </source>
</evidence>
<sequence length="677" mass="76258">MTQVAKKILVTCALPYANGSIHLGHMLEHIQADVWVRYQRMRGHEVNFICADDAHGTPIMLKAQQLGITPEQMIGEMSQEHQTDFAGFNISYDNYHSTHSDENRELSELIYTRLKENGFIKNRTISQLYDPEKGMFLPDRFVKGTCPKCKSADQYGDNCEVCGATYSPTELIEPKSVVSGATPVMRDSEHFFFDLPSFSEMLQAWTRSGALQEQVANKMQEWFESGLQQWDISRDAPYFGFEIPNAPGKYFYVWLDAPIGYMGSFKNLCDKRGDTTSFDEYWKKDSDAELYHFIGKDIVYFHSLFWPAMLEGSHFRKPTNLFVHGYVTVNGAKMSKSRGTFIKASTWLKHFDADSLRYYYTAKLSSRIDDIDLNLEDFVQRVNADIVNKVVNLASRNAGFINKRFDGVLAAELADPQLYKTFTDAAAVIGEAWESREFGKAIREIMALADVANRYVDEQAPWVVAKQEGRDADLQAICSMGINLFRVLMTYLKPVLPTLSERVEAFLNSELNWDAIEQPLLGHKVNTFKALYNRIDMKQVEALVEASKEEVKAAAAPVTGPLADFPIQETITFDDFAKIDLRVALIENAEFVEGSDKLLRLTLDLGGEKRNVFSGIRSAYPDPQALIGRQTVMVANLAPRKMRFGVSEGMVMAAGPGGKDIFLLSPDDGAKPGQQVK</sequence>
<name>SYM_SALPA</name>
<protein>
    <recommendedName>
        <fullName evidence="1">Methionine--tRNA ligase</fullName>
        <ecNumber evidence="1">6.1.1.10</ecNumber>
    </recommendedName>
    <alternativeName>
        <fullName evidence="1">Methionyl-tRNA synthetase</fullName>
        <shortName evidence="1">MetRS</shortName>
    </alternativeName>
</protein>
<proteinExistence type="inferred from homology"/>
<reference key="1">
    <citation type="journal article" date="2004" name="Nat. Genet.">
        <title>Comparison of genome degradation in Paratyphi A and Typhi, human-restricted serovars of Salmonella enterica that cause typhoid.</title>
        <authorList>
            <person name="McClelland M."/>
            <person name="Sanderson K.E."/>
            <person name="Clifton S.W."/>
            <person name="Latreille P."/>
            <person name="Porwollik S."/>
            <person name="Sabo A."/>
            <person name="Meyer R."/>
            <person name="Bieri T."/>
            <person name="Ozersky P."/>
            <person name="McLellan M."/>
            <person name="Harkins C.R."/>
            <person name="Wang C."/>
            <person name="Nguyen C."/>
            <person name="Berghoff A."/>
            <person name="Elliott G."/>
            <person name="Kohlberg S."/>
            <person name="Strong C."/>
            <person name="Du F."/>
            <person name="Carter J."/>
            <person name="Kremizki C."/>
            <person name="Layman D."/>
            <person name="Leonard S."/>
            <person name="Sun H."/>
            <person name="Fulton L."/>
            <person name="Nash W."/>
            <person name="Miner T."/>
            <person name="Minx P."/>
            <person name="Delehaunty K."/>
            <person name="Fronick C."/>
            <person name="Magrini V."/>
            <person name="Nhan M."/>
            <person name="Warren W."/>
            <person name="Florea L."/>
            <person name="Spieth J."/>
            <person name="Wilson R.K."/>
        </authorList>
    </citation>
    <scope>NUCLEOTIDE SEQUENCE [LARGE SCALE GENOMIC DNA]</scope>
    <source>
        <strain>ATCC 9150 / SARB42</strain>
    </source>
</reference>
<comment type="function">
    <text evidence="1">Is required not only for elongation of protein synthesis but also for the initiation of all mRNA translation through initiator tRNA(fMet) aminoacylation.</text>
</comment>
<comment type="catalytic activity">
    <reaction evidence="1">
        <text>tRNA(Met) + L-methionine + ATP = L-methionyl-tRNA(Met) + AMP + diphosphate</text>
        <dbReference type="Rhea" id="RHEA:13481"/>
        <dbReference type="Rhea" id="RHEA-COMP:9667"/>
        <dbReference type="Rhea" id="RHEA-COMP:9698"/>
        <dbReference type="ChEBI" id="CHEBI:30616"/>
        <dbReference type="ChEBI" id="CHEBI:33019"/>
        <dbReference type="ChEBI" id="CHEBI:57844"/>
        <dbReference type="ChEBI" id="CHEBI:78442"/>
        <dbReference type="ChEBI" id="CHEBI:78530"/>
        <dbReference type="ChEBI" id="CHEBI:456215"/>
        <dbReference type="EC" id="6.1.1.10"/>
    </reaction>
</comment>
<comment type="cofactor">
    <cofactor evidence="1">
        <name>Zn(2+)</name>
        <dbReference type="ChEBI" id="CHEBI:29105"/>
    </cofactor>
    <text evidence="1">Binds 1 zinc ion per subunit.</text>
</comment>
<comment type="subunit">
    <text evidence="1">Homodimer.</text>
</comment>
<comment type="subcellular location">
    <subcellularLocation>
        <location evidence="1">Cytoplasm</location>
    </subcellularLocation>
</comment>
<comment type="similarity">
    <text evidence="1">Belongs to the class-I aminoacyl-tRNA synthetase family. MetG type 1 subfamily.</text>
</comment>
<dbReference type="EC" id="6.1.1.10" evidence="1"/>
<dbReference type="EMBL" id="CP000026">
    <property type="protein sequence ID" value="AAV76695.1"/>
    <property type="molecule type" value="Genomic_DNA"/>
</dbReference>
<dbReference type="RefSeq" id="WP_000195335.1">
    <property type="nucleotide sequence ID" value="NC_006511.1"/>
</dbReference>
<dbReference type="SMR" id="Q5PJ43"/>
<dbReference type="KEGG" id="spt:SPA0697"/>
<dbReference type="HOGENOM" id="CLU_009710_7_0_6"/>
<dbReference type="Proteomes" id="UP000008185">
    <property type="component" value="Chromosome"/>
</dbReference>
<dbReference type="GO" id="GO:0005829">
    <property type="term" value="C:cytosol"/>
    <property type="evidence" value="ECO:0007669"/>
    <property type="project" value="TreeGrafter"/>
</dbReference>
<dbReference type="GO" id="GO:0005524">
    <property type="term" value="F:ATP binding"/>
    <property type="evidence" value="ECO:0007669"/>
    <property type="project" value="UniProtKB-UniRule"/>
</dbReference>
<dbReference type="GO" id="GO:0046872">
    <property type="term" value="F:metal ion binding"/>
    <property type="evidence" value="ECO:0007669"/>
    <property type="project" value="UniProtKB-KW"/>
</dbReference>
<dbReference type="GO" id="GO:0004825">
    <property type="term" value="F:methionine-tRNA ligase activity"/>
    <property type="evidence" value="ECO:0007669"/>
    <property type="project" value="UniProtKB-UniRule"/>
</dbReference>
<dbReference type="GO" id="GO:0000049">
    <property type="term" value="F:tRNA binding"/>
    <property type="evidence" value="ECO:0007669"/>
    <property type="project" value="UniProtKB-KW"/>
</dbReference>
<dbReference type="GO" id="GO:0006431">
    <property type="term" value="P:methionyl-tRNA aminoacylation"/>
    <property type="evidence" value="ECO:0007669"/>
    <property type="project" value="UniProtKB-UniRule"/>
</dbReference>
<dbReference type="CDD" id="cd07957">
    <property type="entry name" value="Anticodon_Ia_Met"/>
    <property type="match status" value="1"/>
</dbReference>
<dbReference type="CDD" id="cd00814">
    <property type="entry name" value="MetRS_core"/>
    <property type="match status" value="1"/>
</dbReference>
<dbReference type="CDD" id="cd02800">
    <property type="entry name" value="tRNA_bind_EcMetRS_like"/>
    <property type="match status" value="1"/>
</dbReference>
<dbReference type="FunFam" id="1.10.730.10:FF:000005">
    <property type="entry name" value="Methionine--tRNA ligase"/>
    <property type="match status" value="1"/>
</dbReference>
<dbReference type="FunFam" id="2.20.28.20:FF:000001">
    <property type="entry name" value="Methionine--tRNA ligase"/>
    <property type="match status" value="1"/>
</dbReference>
<dbReference type="FunFam" id="2.40.50.140:FF:000042">
    <property type="entry name" value="Methionine--tRNA ligase"/>
    <property type="match status" value="1"/>
</dbReference>
<dbReference type="Gene3D" id="3.40.50.620">
    <property type="entry name" value="HUPs"/>
    <property type="match status" value="1"/>
</dbReference>
<dbReference type="Gene3D" id="1.10.730.10">
    <property type="entry name" value="Isoleucyl-tRNA Synthetase, Domain 1"/>
    <property type="match status" value="1"/>
</dbReference>
<dbReference type="Gene3D" id="2.20.28.20">
    <property type="entry name" value="Methionyl-tRNA synthetase, Zn-domain"/>
    <property type="match status" value="1"/>
</dbReference>
<dbReference type="Gene3D" id="2.40.50.140">
    <property type="entry name" value="Nucleic acid-binding proteins"/>
    <property type="match status" value="1"/>
</dbReference>
<dbReference type="HAMAP" id="MF_00098">
    <property type="entry name" value="Met_tRNA_synth_type1"/>
    <property type="match status" value="1"/>
</dbReference>
<dbReference type="InterPro" id="IPR001412">
    <property type="entry name" value="aa-tRNA-synth_I_CS"/>
</dbReference>
<dbReference type="InterPro" id="IPR041872">
    <property type="entry name" value="Anticodon_Met"/>
</dbReference>
<dbReference type="InterPro" id="IPR004495">
    <property type="entry name" value="Met-tRNA-synth_bsu_C"/>
</dbReference>
<dbReference type="InterPro" id="IPR023458">
    <property type="entry name" value="Met-tRNA_ligase_1"/>
</dbReference>
<dbReference type="InterPro" id="IPR014758">
    <property type="entry name" value="Met-tRNA_synth"/>
</dbReference>
<dbReference type="InterPro" id="IPR015413">
    <property type="entry name" value="Methionyl/Leucyl_tRNA_Synth"/>
</dbReference>
<dbReference type="InterPro" id="IPR033911">
    <property type="entry name" value="MetRS_core"/>
</dbReference>
<dbReference type="InterPro" id="IPR029038">
    <property type="entry name" value="MetRS_Zn"/>
</dbReference>
<dbReference type="InterPro" id="IPR012340">
    <property type="entry name" value="NA-bd_OB-fold"/>
</dbReference>
<dbReference type="InterPro" id="IPR014729">
    <property type="entry name" value="Rossmann-like_a/b/a_fold"/>
</dbReference>
<dbReference type="InterPro" id="IPR002547">
    <property type="entry name" value="tRNA-bd_dom"/>
</dbReference>
<dbReference type="InterPro" id="IPR009080">
    <property type="entry name" value="tRNAsynth_Ia_anticodon-bd"/>
</dbReference>
<dbReference type="NCBIfam" id="TIGR00398">
    <property type="entry name" value="metG"/>
    <property type="match status" value="1"/>
</dbReference>
<dbReference type="NCBIfam" id="TIGR00399">
    <property type="entry name" value="metG_C_term"/>
    <property type="match status" value="1"/>
</dbReference>
<dbReference type="NCBIfam" id="NF001100">
    <property type="entry name" value="PRK00133.1"/>
    <property type="match status" value="1"/>
</dbReference>
<dbReference type="PANTHER" id="PTHR45765">
    <property type="entry name" value="METHIONINE--TRNA LIGASE"/>
    <property type="match status" value="1"/>
</dbReference>
<dbReference type="PANTHER" id="PTHR45765:SF1">
    <property type="entry name" value="METHIONINE--TRNA LIGASE, CYTOPLASMIC"/>
    <property type="match status" value="1"/>
</dbReference>
<dbReference type="Pfam" id="PF19303">
    <property type="entry name" value="Anticodon_3"/>
    <property type="match status" value="1"/>
</dbReference>
<dbReference type="Pfam" id="PF09334">
    <property type="entry name" value="tRNA-synt_1g"/>
    <property type="match status" value="1"/>
</dbReference>
<dbReference type="Pfam" id="PF01588">
    <property type="entry name" value="tRNA_bind"/>
    <property type="match status" value="1"/>
</dbReference>
<dbReference type="PRINTS" id="PR01041">
    <property type="entry name" value="TRNASYNTHMET"/>
</dbReference>
<dbReference type="SUPFAM" id="SSF47323">
    <property type="entry name" value="Anticodon-binding domain of a subclass of class I aminoacyl-tRNA synthetases"/>
    <property type="match status" value="1"/>
</dbReference>
<dbReference type="SUPFAM" id="SSF57770">
    <property type="entry name" value="Methionyl-tRNA synthetase (MetRS), Zn-domain"/>
    <property type="match status" value="1"/>
</dbReference>
<dbReference type="SUPFAM" id="SSF50249">
    <property type="entry name" value="Nucleic acid-binding proteins"/>
    <property type="match status" value="1"/>
</dbReference>
<dbReference type="SUPFAM" id="SSF52374">
    <property type="entry name" value="Nucleotidylyl transferase"/>
    <property type="match status" value="1"/>
</dbReference>
<dbReference type="PROSITE" id="PS00178">
    <property type="entry name" value="AA_TRNA_LIGASE_I"/>
    <property type="match status" value="1"/>
</dbReference>
<dbReference type="PROSITE" id="PS50886">
    <property type="entry name" value="TRBD"/>
    <property type="match status" value="1"/>
</dbReference>